<feature type="chain" id="PRO_0000433598" description="MICOS complex subunit MIC13 homolog QIL1">
    <location>
        <begin position="1"/>
        <end position="122"/>
    </location>
</feature>
<feature type="transmembrane region" description="Helical" evidence="2">
    <location>
        <begin position="9"/>
        <end position="25"/>
    </location>
</feature>
<proteinExistence type="evidence at transcript level"/>
<accession>Q9VVH3</accession>
<reference key="1">
    <citation type="journal article" date="2000" name="Science">
        <title>The genome sequence of Drosophila melanogaster.</title>
        <authorList>
            <person name="Adams M.D."/>
            <person name="Celniker S.E."/>
            <person name="Holt R.A."/>
            <person name="Evans C.A."/>
            <person name="Gocayne J.D."/>
            <person name="Amanatides P.G."/>
            <person name="Scherer S.E."/>
            <person name="Li P.W."/>
            <person name="Hoskins R.A."/>
            <person name="Galle R.F."/>
            <person name="George R.A."/>
            <person name="Lewis S.E."/>
            <person name="Richards S."/>
            <person name="Ashburner M."/>
            <person name="Henderson S.N."/>
            <person name="Sutton G.G."/>
            <person name="Wortman J.R."/>
            <person name="Yandell M.D."/>
            <person name="Zhang Q."/>
            <person name="Chen L.X."/>
            <person name="Brandon R.C."/>
            <person name="Rogers Y.-H.C."/>
            <person name="Blazej R.G."/>
            <person name="Champe M."/>
            <person name="Pfeiffer B.D."/>
            <person name="Wan K.H."/>
            <person name="Doyle C."/>
            <person name="Baxter E.G."/>
            <person name="Helt G."/>
            <person name="Nelson C.R."/>
            <person name="Miklos G.L.G."/>
            <person name="Abril J.F."/>
            <person name="Agbayani A."/>
            <person name="An H.-J."/>
            <person name="Andrews-Pfannkoch C."/>
            <person name="Baldwin D."/>
            <person name="Ballew R.M."/>
            <person name="Basu A."/>
            <person name="Baxendale J."/>
            <person name="Bayraktaroglu L."/>
            <person name="Beasley E.M."/>
            <person name="Beeson K.Y."/>
            <person name="Benos P.V."/>
            <person name="Berman B.P."/>
            <person name="Bhandari D."/>
            <person name="Bolshakov S."/>
            <person name="Borkova D."/>
            <person name="Botchan M.R."/>
            <person name="Bouck J."/>
            <person name="Brokstein P."/>
            <person name="Brottier P."/>
            <person name="Burtis K.C."/>
            <person name="Busam D.A."/>
            <person name="Butler H."/>
            <person name="Cadieu E."/>
            <person name="Center A."/>
            <person name="Chandra I."/>
            <person name="Cherry J.M."/>
            <person name="Cawley S."/>
            <person name="Dahlke C."/>
            <person name="Davenport L.B."/>
            <person name="Davies P."/>
            <person name="de Pablos B."/>
            <person name="Delcher A."/>
            <person name="Deng Z."/>
            <person name="Mays A.D."/>
            <person name="Dew I."/>
            <person name="Dietz S.M."/>
            <person name="Dodson K."/>
            <person name="Doup L.E."/>
            <person name="Downes M."/>
            <person name="Dugan-Rocha S."/>
            <person name="Dunkov B.C."/>
            <person name="Dunn P."/>
            <person name="Durbin K.J."/>
            <person name="Evangelista C.C."/>
            <person name="Ferraz C."/>
            <person name="Ferriera S."/>
            <person name="Fleischmann W."/>
            <person name="Fosler C."/>
            <person name="Gabrielian A.E."/>
            <person name="Garg N.S."/>
            <person name="Gelbart W.M."/>
            <person name="Glasser K."/>
            <person name="Glodek A."/>
            <person name="Gong F."/>
            <person name="Gorrell J.H."/>
            <person name="Gu Z."/>
            <person name="Guan P."/>
            <person name="Harris M."/>
            <person name="Harris N.L."/>
            <person name="Harvey D.A."/>
            <person name="Heiman T.J."/>
            <person name="Hernandez J.R."/>
            <person name="Houck J."/>
            <person name="Hostin D."/>
            <person name="Houston K.A."/>
            <person name="Howland T.J."/>
            <person name="Wei M.-H."/>
            <person name="Ibegwam C."/>
            <person name="Jalali M."/>
            <person name="Kalush F."/>
            <person name="Karpen G.H."/>
            <person name="Ke Z."/>
            <person name="Kennison J.A."/>
            <person name="Ketchum K.A."/>
            <person name="Kimmel B.E."/>
            <person name="Kodira C.D."/>
            <person name="Kraft C.L."/>
            <person name="Kravitz S."/>
            <person name="Kulp D."/>
            <person name="Lai Z."/>
            <person name="Lasko P."/>
            <person name="Lei Y."/>
            <person name="Levitsky A.A."/>
            <person name="Li J.H."/>
            <person name="Li Z."/>
            <person name="Liang Y."/>
            <person name="Lin X."/>
            <person name="Liu X."/>
            <person name="Mattei B."/>
            <person name="McIntosh T.C."/>
            <person name="McLeod M.P."/>
            <person name="McPherson D."/>
            <person name="Merkulov G."/>
            <person name="Milshina N.V."/>
            <person name="Mobarry C."/>
            <person name="Morris J."/>
            <person name="Moshrefi A."/>
            <person name="Mount S.M."/>
            <person name="Moy M."/>
            <person name="Murphy B."/>
            <person name="Murphy L."/>
            <person name="Muzny D.M."/>
            <person name="Nelson D.L."/>
            <person name="Nelson D.R."/>
            <person name="Nelson K.A."/>
            <person name="Nixon K."/>
            <person name="Nusskern D.R."/>
            <person name="Pacleb J.M."/>
            <person name="Palazzolo M."/>
            <person name="Pittman G.S."/>
            <person name="Pan S."/>
            <person name="Pollard J."/>
            <person name="Puri V."/>
            <person name="Reese M.G."/>
            <person name="Reinert K."/>
            <person name="Remington K."/>
            <person name="Saunders R.D.C."/>
            <person name="Scheeler F."/>
            <person name="Shen H."/>
            <person name="Shue B.C."/>
            <person name="Siden-Kiamos I."/>
            <person name="Simpson M."/>
            <person name="Skupski M.P."/>
            <person name="Smith T.J."/>
            <person name="Spier E."/>
            <person name="Spradling A.C."/>
            <person name="Stapleton M."/>
            <person name="Strong R."/>
            <person name="Sun E."/>
            <person name="Svirskas R."/>
            <person name="Tector C."/>
            <person name="Turner R."/>
            <person name="Venter E."/>
            <person name="Wang A.H."/>
            <person name="Wang X."/>
            <person name="Wang Z.-Y."/>
            <person name="Wassarman D.A."/>
            <person name="Weinstock G.M."/>
            <person name="Weissenbach J."/>
            <person name="Williams S.M."/>
            <person name="Woodage T."/>
            <person name="Worley K.C."/>
            <person name="Wu D."/>
            <person name="Yang S."/>
            <person name="Yao Q.A."/>
            <person name="Ye J."/>
            <person name="Yeh R.-F."/>
            <person name="Zaveri J.S."/>
            <person name="Zhan M."/>
            <person name="Zhang G."/>
            <person name="Zhao Q."/>
            <person name="Zheng L."/>
            <person name="Zheng X.H."/>
            <person name="Zhong F.N."/>
            <person name="Zhong W."/>
            <person name="Zhou X."/>
            <person name="Zhu S.C."/>
            <person name="Zhu X."/>
            <person name="Smith H.O."/>
            <person name="Gibbs R.A."/>
            <person name="Myers E.W."/>
            <person name="Rubin G.M."/>
            <person name="Venter J.C."/>
        </authorList>
    </citation>
    <scope>NUCLEOTIDE SEQUENCE [LARGE SCALE GENOMIC DNA]</scope>
    <source>
        <strain>Berkeley</strain>
    </source>
</reference>
<reference key="2">
    <citation type="journal article" date="2002" name="Genome Biol.">
        <title>Annotation of the Drosophila melanogaster euchromatic genome: a systematic review.</title>
        <authorList>
            <person name="Misra S."/>
            <person name="Crosby M.A."/>
            <person name="Mungall C.J."/>
            <person name="Matthews B.B."/>
            <person name="Campbell K.S."/>
            <person name="Hradecky P."/>
            <person name="Huang Y."/>
            <person name="Kaminker J.S."/>
            <person name="Millburn G.H."/>
            <person name="Prochnik S.E."/>
            <person name="Smith C.D."/>
            <person name="Tupy J.L."/>
            <person name="Whitfield E.J."/>
            <person name="Bayraktaroglu L."/>
            <person name="Berman B.P."/>
            <person name="Bettencourt B.R."/>
            <person name="Celniker S.E."/>
            <person name="de Grey A.D.N.J."/>
            <person name="Drysdale R.A."/>
            <person name="Harris N.L."/>
            <person name="Richter J."/>
            <person name="Russo S."/>
            <person name="Schroeder A.J."/>
            <person name="Shu S.Q."/>
            <person name="Stapleton M."/>
            <person name="Yamada C."/>
            <person name="Ashburner M."/>
            <person name="Gelbart W.M."/>
            <person name="Rubin G.M."/>
            <person name="Lewis S.E."/>
        </authorList>
    </citation>
    <scope>GENOME REANNOTATION</scope>
    <source>
        <strain>Berkeley</strain>
    </source>
</reference>
<reference key="3">
    <citation type="journal article" date="2002" name="Genome Biol.">
        <title>A Drosophila full-length cDNA resource.</title>
        <authorList>
            <person name="Stapleton M."/>
            <person name="Carlson J.W."/>
            <person name="Brokstein P."/>
            <person name="Yu C."/>
            <person name="Champe M."/>
            <person name="George R.A."/>
            <person name="Guarin H."/>
            <person name="Kronmiller B."/>
            <person name="Pacleb J.M."/>
            <person name="Park S."/>
            <person name="Wan K.H."/>
            <person name="Rubin G.M."/>
            <person name="Celniker S.E."/>
        </authorList>
    </citation>
    <scope>NUCLEOTIDE SEQUENCE [LARGE SCALE MRNA]</scope>
    <source>
        <strain>Berkeley</strain>
        <tissue>Embryo</tissue>
    </source>
</reference>
<reference key="4">
    <citation type="journal article" date="2015" name="Elife">
        <title>QIL1 is a novel mitochondrial protein required for MICOS complex stability and cristae morphology.</title>
        <authorList>
            <person name="Guarani V."/>
            <person name="McNeill E.M."/>
            <person name="Paulo J.A."/>
            <person name="Huttlin E.L."/>
            <person name="Froehlich F."/>
            <person name="Gygi S.P."/>
            <person name="Van Vactor D."/>
            <person name="Harper J.W."/>
        </authorList>
    </citation>
    <scope>FUNCTION</scope>
</reference>
<dbReference type="EMBL" id="AE014296">
    <property type="protein sequence ID" value="AAF49338.1"/>
    <property type="molecule type" value="Genomic_DNA"/>
</dbReference>
<dbReference type="EMBL" id="AY071567">
    <property type="protein sequence ID" value="AAL49189.1"/>
    <property type="molecule type" value="mRNA"/>
</dbReference>
<dbReference type="RefSeq" id="NP_648983.1">
    <property type="nucleotide sequence ID" value="NM_140726.3"/>
</dbReference>
<dbReference type="ComplexPortal" id="CPX-25732">
    <property type="entry name" value="MICOS mitochondrial contact site and cristae organizing system complex, MIC10A variant"/>
</dbReference>
<dbReference type="ComplexPortal" id="CPX-25733">
    <property type="entry name" value="MICOS mitochondrial contact site and cristae organizing system complex, MIC10B variant"/>
</dbReference>
<dbReference type="ComplexPortal" id="CPX-25735">
    <property type="entry name" value="MICOS mitochondrial contact site and cristae organizing system complex, MIC10C variant"/>
</dbReference>
<dbReference type="FunCoup" id="Q9VVH3">
    <property type="interactions" value="104"/>
</dbReference>
<dbReference type="IntAct" id="Q9VVH3">
    <property type="interactions" value="1"/>
</dbReference>
<dbReference type="STRING" id="7227.FBpp0074982"/>
<dbReference type="PaxDb" id="7227-FBpp0074982"/>
<dbReference type="DNASU" id="39948"/>
<dbReference type="EnsemblMetazoa" id="FBtr0075220">
    <property type="protein sequence ID" value="FBpp0074982"/>
    <property type="gene ID" value="FBgn0036726"/>
</dbReference>
<dbReference type="GeneID" id="39948"/>
<dbReference type="KEGG" id="dme:Dmel_CG7603"/>
<dbReference type="UCSC" id="CG7603-RA">
    <property type="organism name" value="d. melanogaster"/>
</dbReference>
<dbReference type="AGR" id="FB:FBgn0036726"/>
<dbReference type="CTD" id="39948"/>
<dbReference type="FlyBase" id="FBgn0036726">
    <property type="gene designation" value="QIL1"/>
</dbReference>
<dbReference type="VEuPathDB" id="VectorBase:FBgn0036726"/>
<dbReference type="eggNOG" id="ENOG502S7FS">
    <property type="taxonomic scope" value="Eukaryota"/>
</dbReference>
<dbReference type="HOGENOM" id="CLU_137714_1_0_1"/>
<dbReference type="InParanoid" id="Q9VVH3"/>
<dbReference type="OMA" id="FIHMLPC"/>
<dbReference type="OrthoDB" id="5948578at2759"/>
<dbReference type="PhylomeDB" id="Q9VVH3"/>
<dbReference type="BioGRID-ORCS" id="39948">
    <property type="hits" value="0 hits in 1 CRISPR screen"/>
</dbReference>
<dbReference type="GenomeRNAi" id="39948"/>
<dbReference type="PRO" id="PR:Q9VVH3"/>
<dbReference type="Proteomes" id="UP000000803">
    <property type="component" value="Chromosome 3L"/>
</dbReference>
<dbReference type="Bgee" id="FBgn0036726">
    <property type="expression patterns" value="Expressed in adult hindgut (Drosophila) and 248 other cell types or tissues"/>
</dbReference>
<dbReference type="ExpressionAtlas" id="Q9VVH3">
    <property type="expression patterns" value="baseline and differential"/>
</dbReference>
<dbReference type="GO" id="GO:0061617">
    <property type="term" value="C:MICOS complex"/>
    <property type="evidence" value="ECO:0000314"/>
    <property type="project" value="FlyBase"/>
</dbReference>
<dbReference type="GO" id="GO:0044284">
    <property type="term" value="C:mitochondrial crista junction"/>
    <property type="evidence" value="ECO:0000318"/>
    <property type="project" value="GO_Central"/>
</dbReference>
<dbReference type="GO" id="GO:0042407">
    <property type="term" value="P:cristae formation"/>
    <property type="evidence" value="ECO:0000315"/>
    <property type="project" value="UniProtKB"/>
</dbReference>
<dbReference type="GO" id="GO:1903850">
    <property type="term" value="P:regulation of cristae formation"/>
    <property type="evidence" value="ECO:0000315"/>
    <property type="project" value="FlyBase"/>
</dbReference>
<dbReference type="InterPro" id="IPR026769">
    <property type="entry name" value="Mic13"/>
</dbReference>
<dbReference type="PANTHER" id="PTHR31816">
    <property type="entry name" value="MICOS COMPLEX SUBUNIT MIC13"/>
    <property type="match status" value="1"/>
</dbReference>
<dbReference type="PANTHER" id="PTHR31816:SF3">
    <property type="entry name" value="MICOS COMPLEX SUBUNIT MIC13"/>
    <property type="match status" value="1"/>
</dbReference>
<dbReference type="Pfam" id="PF15884">
    <property type="entry name" value="QIL1"/>
    <property type="match status" value="1"/>
</dbReference>
<protein>
    <recommendedName>
        <fullName evidence="4">MICOS complex subunit MIC13 homolog QIL1</fullName>
    </recommendedName>
</protein>
<gene>
    <name evidence="5" type="primary">QIL1</name>
    <name evidence="5" type="ORF">CG7603</name>
</gene>
<organism>
    <name type="scientific">Drosophila melanogaster</name>
    <name type="common">Fruit fly</name>
    <dbReference type="NCBI Taxonomy" id="7227"/>
    <lineage>
        <taxon>Eukaryota</taxon>
        <taxon>Metazoa</taxon>
        <taxon>Ecdysozoa</taxon>
        <taxon>Arthropoda</taxon>
        <taxon>Hexapoda</taxon>
        <taxon>Insecta</taxon>
        <taxon>Pterygota</taxon>
        <taxon>Neoptera</taxon>
        <taxon>Endopterygota</taxon>
        <taxon>Diptera</taxon>
        <taxon>Brachycera</taxon>
        <taxon>Muscomorpha</taxon>
        <taxon>Ephydroidea</taxon>
        <taxon>Drosophilidae</taxon>
        <taxon>Drosophila</taxon>
        <taxon>Sophophora</taxon>
    </lineage>
</organism>
<comment type="function">
    <text evidence="3">Component of the MICOS complex, a large protein complex of the mitochondrial inner membrane that plays crucial roles in the maintenance of crista junctions, inner membrane architecture, and formation of contact sites to the outer membrane.</text>
</comment>
<comment type="subunit">
    <text evidence="1">Component of the mitochondrial contact site and cristae organizing system (MICOS) complex.</text>
</comment>
<comment type="subcellular location">
    <subcellularLocation>
        <location evidence="1">Mitochondrion inner membrane</location>
        <topology evidence="2">Single-pass membrane protein</topology>
    </subcellularLocation>
    <text evidence="1">Enriched at crista junctions.</text>
</comment>
<comment type="similarity">
    <text evidence="4">Belongs to the MICOS complex subunit Mic13 family.</text>
</comment>
<keyword id="KW-0472">Membrane</keyword>
<keyword id="KW-0496">Mitochondrion</keyword>
<keyword id="KW-0999">Mitochondrion inner membrane</keyword>
<keyword id="KW-1185">Reference proteome</keyword>
<keyword id="KW-0812">Transmembrane</keyword>
<keyword id="KW-1133">Transmembrane helix</keyword>
<name>MIC13_DROME</name>
<sequence>MVLGFLVRGGLVAATVYYTQKVGIWGDSDQTDKLYNDIKSELRPHVQKLEKQLPFEVPQLPKTGEMRFLAKHYYNEGVKNTFRFIHMLPCYAGRGLKKVKDTFQDFAQSPAIAGGAESSPPK</sequence>
<evidence type="ECO:0000250" key="1">
    <source>
        <dbReference type="UniProtKB" id="Q5XKP0"/>
    </source>
</evidence>
<evidence type="ECO:0000255" key="2"/>
<evidence type="ECO:0000269" key="3">
    <source>
    </source>
</evidence>
<evidence type="ECO:0000305" key="4"/>
<evidence type="ECO:0000312" key="5">
    <source>
        <dbReference type="FlyBase" id="FBgn0036726"/>
    </source>
</evidence>